<organism>
    <name type="scientific">Chelativorans sp. (strain BNC1)</name>
    <dbReference type="NCBI Taxonomy" id="266779"/>
    <lineage>
        <taxon>Bacteria</taxon>
        <taxon>Pseudomonadati</taxon>
        <taxon>Pseudomonadota</taxon>
        <taxon>Alphaproteobacteria</taxon>
        <taxon>Hyphomicrobiales</taxon>
        <taxon>Phyllobacteriaceae</taxon>
        <taxon>Chelativorans</taxon>
    </lineage>
</organism>
<sequence>MRSGVIAQKIGMTRVYNETGEHIPVTVLRMENCQVVAQRTEEKNGYTAVQLGVGLAKVKNTSKALRGHFAAASVEPKAKVAEFRVSPENLLDVGAEITADHFVPGQKVDVTGTSIGKGFQGVMKRHNFGGGRATHGNSVSHRTHGSTGQRQDPGKVFKGKKMAGHMGDRRVTTQNLEVVSTDTERGLILVRGAVPGSKGSWIMVRDAVKAPLPKEAPLPAAIRASNNNAEKAAATAAGEGAE</sequence>
<protein>
    <recommendedName>
        <fullName evidence="1">Large ribosomal subunit protein uL3</fullName>
    </recommendedName>
    <alternativeName>
        <fullName evidence="3">50S ribosomal protein L3</fullName>
    </alternativeName>
</protein>
<accession>Q11HQ2</accession>
<reference key="1">
    <citation type="submission" date="2006-06" db="EMBL/GenBank/DDBJ databases">
        <title>Complete sequence of chromosome of Mesorhizobium sp. BNC1.</title>
        <authorList>
            <consortium name="US DOE Joint Genome Institute"/>
            <person name="Copeland A."/>
            <person name="Lucas S."/>
            <person name="Lapidus A."/>
            <person name="Barry K."/>
            <person name="Detter J.C."/>
            <person name="Glavina del Rio T."/>
            <person name="Hammon N."/>
            <person name="Israni S."/>
            <person name="Dalin E."/>
            <person name="Tice H."/>
            <person name="Pitluck S."/>
            <person name="Chertkov O."/>
            <person name="Brettin T."/>
            <person name="Bruce D."/>
            <person name="Han C."/>
            <person name="Tapia R."/>
            <person name="Gilna P."/>
            <person name="Schmutz J."/>
            <person name="Larimer F."/>
            <person name="Land M."/>
            <person name="Hauser L."/>
            <person name="Kyrpides N."/>
            <person name="Mikhailova N."/>
            <person name="Richardson P."/>
        </authorList>
    </citation>
    <scope>NUCLEOTIDE SEQUENCE [LARGE SCALE GENOMIC DNA]</scope>
    <source>
        <strain>BNC1</strain>
    </source>
</reference>
<evidence type="ECO:0000255" key="1">
    <source>
        <dbReference type="HAMAP-Rule" id="MF_01325"/>
    </source>
</evidence>
<evidence type="ECO:0000256" key="2">
    <source>
        <dbReference type="SAM" id="MobiDB-lite"/>
    </source>
</evidence>
<evidence type="ECO:0000305" key="3"/>
<name>RL3_CHESB</name>
<dbReference type="EMBL" id="CP000390">
    <property type="protein sequence ID" value="ABG63073.1"/>
    <property type="molecule type" value="Genomic_DNA"/>
</dbReference>
<dbReference type="SMR" id="Q11HQ2"/>
<dbReference type="STRING" id="266779.Meso_1678"/>
<dbReference type="KEGG" id="mes:Meso_1678"/>
<dbReference type="eggNOG" id="COG0087">
    <property type="taxonomic scope" value="Bacteria"/>
</dbReference>
<dbReference type="HOGENOM" id="CLU_044142_2_0_5"/>
<dbReference type="OrthoDB" id="9806135at2"/>
<dbReference type="GO" id="GO:0022625">
    <property type="term" value="C:cytosolic large ribosomal subunit"/>
    <property type="evidence" value="ECO:0007669"/>
    <property type="project" value="TreeGrafter"/>
</dbReference>
<dbReference type="GO" id="GO:0019843">
    <property type="term" value="F:rRNA binding"/>
    <property type="evidence" value="ECO:0007669"/>
    <property type="project" value="UniProtKB-UniRule"/>
</dbReference>
<dbReference type="GO" id="GO:0003735">
    <property type="term" value="F:structural constituent of ribosome"/>
    <property type="evidence" value="ECO:0007669"/>
    <property type="project" value="InterPro"/>
</dbReference>
<dbReference type="GO" id="GO:0006412">
    <property type="term" value="P:translation"/>
    <property type="evidence" value="ECO:0007669"/>
    <property type="project" value="UniProtKB-UniRule"/>
</dbReference>
<dbReference type="FunFam" id="2.40.30.10:FF:000004">
    <property type="entry name" value="50S ribosomal protein L3"/>
    <property type="match status" value="1"/>
</dbReference>
<dbReference type="FunFam" id="3.30.160.810:FF:000001">
    <property type="entry name" value="50S ribosomal protein L3"/>
    <property type="match status" value="1"/>
</dbReference>
<dbReference type="Gene3D" id="3.30.160.810">
    <property type="match status" value="1"/>
</dbReference>
<dbReference type="Gene3D" id="2.40.30.10">
    <property type="entry name" value="Translation factors"/>
    <property type="match status" value="1"/>
</dbReference>
<dbReference type="HAMAP" id="MF_01325_B">
    <property type="entry name" value="Ribosomal_uL3_B"/>
    <property type="match status" value="1"/>
</dbReference>
<dbReference type="InterPro" id="IPR000597">
    <property type="entry name" value="Ribosomal_uL3"/>
</dbReference>
<dbReference type="InterPro" id="IPR019927">
    <property type="entry name" value="Ribosomal_uL3_bac/org-type"/>
</dbReference>
<dbReference type="InterPro" id="IPR019926">
    <property type="entry name" value="Ribosomal_uL3_CS"/>
</dbReference>
<dbReference type="InterPro" id="IPR009000">
    <property type="entry name" value="Transl_B-barrel_sf"/>
</dbReference>
<dbReference type="NCBIfam" id="TIGR03625">
    <property type="entry name" value="L3_bact"/>
    <property type="match status" value="1"/>
</dbReference>
<dbReference type="PANTHER" id="PTHR11229">
    <property type="entry name" value="50S RIBOSOMAL PROTEIN L3"/>
    <property type="match status" value="1"/>
</dbReference>
<dbReference type="PANTHER" id="PTHR11229:SF16">
    <property type="entry name" value="LARGE RIBOSOMAL SUBUNIT PROTEIN UL3C"/>
    <property type="match status" value="1"/>
</dbReference>
<dbReference type="Pfam" id="PF00297">
    <property type="entry name" value="Ribosomal_L3"/>
    <property type="match status" value="1"/>
</dbReference>
<dbReference type="SUPFAM" id="SSF50447">
    <property type="entry name" value="Translation proteins"/>
    <property type="match status" value="1"/>
</dbReference>
<dbReference type="PROSITE" id="PS00474">
    <property type="entry name" value="RIBOSOMAL_L3"/>
    <property type="match status" value="1"/>
</dbReference>
<gene>
    <name evidence="1" type="primary">rplC</name>
    <name type="ordered locus">Meso_1678</name>
</gene>
<feature type="chain" id="PRO_1000052075" description="Large ribosomal subunit protein uL3">
    <location>
        <begin position="1"/>
        <end position="242"/>
    </location>
</feature>
<feature type="region of interest" description="Disordered" evidence="2">
    <location>
        <begin position="131"/>
        <end position="165"/>
    </location>
</feature>
<feature type="compositionally biased region" description="Polar residues" evidence="2">
    <location>
        <begin position="135"/>
        <end position="150"/>
    </location>
</feature>
<feature type="modified residue" description="N5-methylglutamine" evidence="1">
    <location>
        <position position="151"/>
    </location>
</feature>
<comment type="function">
    <text evidence="1">One of the primary rRNA binding proteins, it binds directly near the 3'-end of the 23S rRNA, where it nucleates assembly of the 50S subunit.</text>
</comment>
<comment type="subunit">
    <text evidence="1">Part of the 50S ribosomal subunit. Forms a cluster with proteins L14 and L19.</text>
</comment>
<comment type="PTM">
    <text evidence="1">Methylated by PrmB.</text>
</comment>
<comment type="similarity">
    <text evidence="1">Belongs to the universal ribosomal protein uL3 family.</text>
</comment>
<keyword id="KW-0488">Methylation</keyword>
<keyword id="KW-0687">Ribonucleoprotein</keyword>
<keyword id="KW-0689">Ribosomal protein</keyword>
<keyword id="KW-0694">RNA-binding</keyword>
<keyword id="KW-0699">rRNA-binding</keyword>
<proteinExistence type="inferred from homology"/>